<sequence length="207" mass="23551">MPKVIGLTGGIASGKSTVSELLSVFGFKVVDADKAAREAVKKGSKGLAQVREVFGDEAIDENGEMNRRYMGDLVFNHPEKRLELNAIIHPIVRDIMEEEKQEYLKQGYNVIMDIPLLFENELENTVDEVWVVYTSESIQMDRLMQRNNLSLEDAKARVYSQISIDKKSRMADHVIDNLGDKLELKQNLERLLEEEGYIEKPNYGEGD</sequence>
<organism>
    <name type="scientific">Staphylococcus aureus (strain MRSA252)</name>
    <dbReference type="NCBI Taxonomy" id="282458"/>
    <lineage>
        <taxon>Bacteria</taxon>
        <taxon>Bacillati</taxon>
        <taxon>Bacillota</taxon>
        <taxon>Bacilli</taxon>
        <taxon>Bacillales</taxon>
        <taxon>Staphylococcaceae</taxon>
        <taxon>Staphylococcus</taxon>
    </lineage>
</organism>
<accession>Q6GG18</accession>
<name>COAE_STAAR</name>
<protein>
    <recommendedName>
        <fullName evidence="1">Dephospho-CoA kinase</fullName>
        <ecNumber evidence="1">2.7.1.24</ecNumber>
    </recommendedName>
    <alternativeName>
        <fullName evidence="1">Dephosphocoenzyme A kinase</fullName>
    </alternativeName>
</protein>
<comment type="function">
    <text evidence="1">Catalyzes the phosphorylation of the 3'-hydroxyl group of dephosphocoenzyme A to form coenzyme A.</text>
</comment>
<comment type="catalytic activity">
    <reaction evidence="1">
        <text>3'-dephospho-CoA + ATP = ADP + CoA + H(+)</text>
        <dbReference type="Rhea" id="RHEA:18245"/>
        <dbReference type="ChEBI" id="CHEBI:15378"/>
        <dbReference type="ChEBI" id="CHEBI:30616"/>
        <dbReference type="ChEBI" id="CHEBI:57287"/>
        <dbReference type="ChEBI" id="CHEBI:57328"/>
        <dbReference type="ChEBI" id="CHEBI:456216"/>
        <dbReference type="EC" id="2.7.1.24"/>
    </reaction>
</comment>
<comment type="pathway">
    <text evidence="1">Cofactor biosynthesis; coenzyme A biosynthesis; CoA from (R)-pantothenate: step 5/5.</text>
</comment>
<comment type="subcellular location">
    <subcellularLocation>
        <location evidence="1">Cytoplasm</location>
    </subcellularLocation>
</comment>
<comment type="similarity">
    <text evidence="1">Belongs to the CoaE family.</text>
</comment>
<evidence type="ECO:0000255" key="1">
    <source>
        <dbReference type="HAMAP-Rule" id="MF_00376"/>
    </source>
</evidence>
<gene>
    <name evidence="1" type="primary">coaE</name>
    <name type="ordered locus">SAR1767</name>
</gene>
<keyword id="KW-0067">ATP-binding</keyword>
<keyword id="KW-0173">Coenzyme A biosynthesis</keyword>
<keyword id="KW-0963">Cytoplasm</keyword>
<keyword id="KW-0418">Kinase</keyword>
<keyword id="KW-0547">Nucleotide-binding</keyword>
<keyword id="KW-0808">Transferase</keyword>
<proteinExistence type="inferred from homology"/>
<dbReference type="EC" id="2.7.1.24" evidence="1"/>
<dbReference type="EMBL" id="BX571856">
    <property type="protein sequence ID" value="CAG40758.1"/>
    <property type="molecule type" value="Genomic_DNA"/>
</dbReference>
<dbReference type="RefSeq" id="WP_001127168.1">
    <property type="nucleotide sequence ID" value="NC_002952.2"/>
</dbReference>
<dbReference type="SMR" id="Q6GG18"/>
<dbReference type="KEGG" id="sar:SAR1767"/>
<dbReference type="HOGENOM" id="CLU_057180_0_0_9"/>
<dbReference type="UniPathway" id="UPA00241">
    <property type="reaction ID" value="UER00356"/>
</dbReference>
<dbReference type="Proteomes" id="UP000000596">
    <property type="component" value="Chromosome"/>
</dbReference>
<dbReference type="GO" id="GO:0005737">
    <property type="term" value="C:cytoplasm"/>
    <property type="evidence" value="ECO:0007669"/>
    <property type="project" value="UniProtKB-SubCell"/>
</dbReference>
<dbReference type="GO" id="GO:0005524">
    <property type="term" value="F:ATP binding"/>
    <property type="evidence" value="ECO:0007669"/>
    <property type="project" value="UniProtKB-UniRule"/>
</dbReference>
<dbReference type="GO" id="GO:0004140">
    <property type="term" value="F:dephospho-CoA kinase activity"/>
    <property type="evidence" value="ECO:0007669"/>
    <property type="project" value="UniProtKB-UniRule"/>
</dbReference>
<dbReference type="GO" id="GO:0015937">
    <property type="term" value="P:coenzyme A biosynthetic process"/>
    <property type="evidence" value="ECO:0007669"/>
    <property type="project" value="UniProtKB-UniRule"/>
</dbReference>
<dbReference type="CDD" id="cd02022">
    <property type="entry name" value="DPCK"/>
    <property type="match status" value="1"/>
</dbReference>
<dbReference type="FunFam" id="3.40.50.300:FF:000991">
    <property type="entry name" value="Dephospho-CoA kinase"/>
    <property type="match status" value="1"/>
</dbReference>
<dbReference type="Gene3D" id="3.40.50.300">
    <property type="entry name" value="P-loop containing nucleotide triphosphate hydrolases"/>
    <property type="match status" value="1"/>
</dbReference>
<dbReference type="HAMAP" id="MF_00376">
    <property type="entry name" value="Dephospho_CoA_kinase"/>
    <property type="match status" value="1"/>
</dbReference>
<dbReference type="InterPro" id="IPR001977">
    <property type="entry name" value="Depp_CoAkinase"/>
</dbReference>
<dbReference type="InterPro" id="IPR027417">
    <property type="entry name" value="P-loop_NTPase"/>
</dbReference>
<dbReference type="NCBIfam" id="TIGR00152">
    <property type="entry name" value="dephospho-CoA kinase"/>
    <property type="match status" value="1"/>
</dbReference>
<dbReference type="PANTHER" id="PTHR10695:SF46">
    <property type="entry name" value="BIFUNCTIONAL COENZYME A SYNTHASE-RELATED"/>
    <property type="match status" value="1"/>
</dbReference>
<dbReference type="PANTHER" id="PTHR10695">
    <property type="entry name" value="DEPHOSPHO-COA KINASE-RELATED"/>
    <property type="match status" value="1"/>
</dbReference>
<dbReference type="Pfam" id="PF01121">
    <property type="entry name" value="CoaE"/>
    <property type="match status" value="1"/>
</dbReference>
<dbReference type="SUPFAM" id="SSF52540">
    <property type="entry name" value="P-loop containing nucleoside triphosphate hydrolases"/>
    <property type="match status" value="1"/>
</dbReference>
<dbReference type="PROSITE" id="PS51219">
    <property type="entry name" value="DPCK"/>
    <property type="match status" value="1"/>
</dbReference>
<reference key="1">
    <citation type="journal article" date="2004" name="Proc. Natl. Acad. Sci. U.S.A.">
        <title>Complete genomes of two clinical Staphylococcus aureus strains: evidence for the rapid evolution of virulence and drug resistance.</title>
        <authorList>
            <person name="Holden M.T.G."/>
            <person name="Feil E.J."/>
            <person name="Lindsay J.A."/>
            <person name="Peacock S.J."/>
            <person name="Day N.P.J."/>
            <person name="Enright M.C."/>
            <person name="Foster T.J."/>
            <person name="Moore C.E."/>
            <person name="Hurst L."/>
            <person name="Atkin R."/>
            <person name="Barron A."/>
            <person name="Bason N."/>
            <person name="Bentley S.D."/>
            <person name="Chillingworth C."/>
            <person name="Chillingworth T."/>
            <person name="Churcher C."/>
            <person name="Clark L."/>
            <person name="Corton C."/>
            <person name="Cronin A."/>
            <person name="Doggett J."/>
            <person name="Dowd L."/>
            <person name="Feltwell T."/>
            <person name="Hance Z."/>
            <person name="Harris B."/>
            <person name="Hauser H."/>
            <person name="Holroyd S."/>
            <person name="Jagels K."/>
            <person name="James K.D."/>
            <person name="Lennard N."/>
            <person name="Line A."/>
            <person name="Mayes R."/>
            <person name="Moule S."/>
            <person name="Mungall K."/>
            <person name="Ormond D."/>
            <person name="Quail M.A."/>
            <person name="Rabbinowitsch E."/>
            <person name="Rutherford K.M."/>
            <person name="Sanders M."/>
            <person name="Sharp S."/>
            <person name="Simmonds M."/>
            <person name="Stevens K."/>
            <person name="Whitehead S."/>
            <person name="Barrell B.G."/>
            <person name="Spratt B.G."/>
            <person name="Parkhill J."/>
        </authorList>
    </citation>
    <scope>NUCLEOTIDE SEQUENCE [LARGE SCALE GENOMIC DNA]</scope>
    <source>
        <strain>MRSA252</strain>
    </source>
</reference>
<feature type="chain" id="PRO_0000173000" description="Dephospho-CoA kinase">
    <location>
        <begin position="1"/>
        <end position="207"/>
    </location>
</feature>
<feature type="domain" description="DPCK" evidence="1">
    <location>
        <begin position="4"/>
        <end position="203"/>
    </location>
</feature>
<feature type="binding site" evidence="1">
    <location>
        <begin position="12"/>
        <end position="17"/>
    </location>
    <ligand>
        <name>ATP</name>
        <dbReference type="ChEBI" id="CHEBI:30616"/>
    </ligand>
</feature>